<dbReference type="EC" id="7.1.2.2" evidence="1"/>
<dbReference type="EMBL" id="Z11874">
    <property type="protein sequence ID" value="CAA77932.1"/>
    <property type="molecule type" value="Genomic_DNA"/>
</dbReference>
<dbReference type="EMBL" id="X70810">
    <property type="protein sequence ID" value="CAA50115.1"/>
    <property type="molecule type" value="Genomic_DNA"/>
</dbReference>
<dbReference type="PIR" id="S29801">
    <property type="entry name" value="PWEGA"/>
</dbReference>
<dbReference type="RefSeq" id="NP_041928.1">
    <property type="nucleotide sequence ID" value="NC_001603.2"/>
</dbReference>
<dbReference type="SMR" id="P30392"/>
<dbReference type="GeneID" id="807483"/>
<dbReference type="GO" id="GO:0009535">
    <property type="term" value="C:chloroplast thylakoid membrane"/>
    <property type="evidence" value="ECO:0007669"/>
    <property type="project" value="UniProtKB-SubCell"/>
</dbReference>
<dbReference type="GO" id="GO:0045259">
    <property type="term" value="C:proton-transporting ATP synthase complex"/>
    <property type="evidence" value="ECO:0007669"/>
    <property type="project" value="UniProtKB-KW"/>
</dbReference>
<dbReference type="GO" id="GO:0043531">
    <property type="term" value="F:ADP binding"/>
    <property type="evidence" value="ECO:0007669"/>
    <property type="project" value="TreeGrafter"/>
</dbReference>
<dbReference type="GO" id="GO:0005524">
    <property type="term" value="F:ATP binding"/>
    <property type="evidence" value="ECO:0007669"/>
    <property type="project" value="UniProtKB-UniRule"/>
</dbReference>
<dbReference type="GO" id="GO:0046933">
    <property type="term" value="F:proton-transporting ATP synthase activity, rotational mechanism"/>
    <property type="evidence" value="ECO:0007669"/>
    <property type="project" value="UniProtKB-UniRule"/>
</dbReference>
<dbReference type="CDD" id="cd18113">
    <property type="entry name" value="ATP-synt_F1_alpha_C"/>
    <property type="match status" value="1"/>
</dbReference>
<dbReference type="CDD" id="cd18116">
    <property type="entry name" value="ATP-synt_F1_alpha_N"/>
    <property type="match status" value="1"/>
</dbReference>
<dbReference type="CDD" id="cd01132">
    <property type="entry name" value="F1-ATPase_alpha_CD"/>
    <property type="match status" value="1"/>
</dbReference>
<dbReference type="FunFam" id="1.20.150.20:FF:000001">
    <property type="entry name" value="ATP synthase subunit alpha"/>
    <property type="match status" value="1"/>
</dbReference>
<dbReference type="FunFam" id="2.40.30.20:FF:000001">
    <property type="entry name" value="ATP synthase subunit alpha"/>
    <property type="match status" value="1"/>
</dbReference>
<dbReference type="FunFam" id="3.40.50.300:FF:000002">
    <property type="entry name" value="ATP synthase subunit alpha"/>
    <property type="match status" value="1"/>
</dbReference>
<dbReference type="Gene3D" id="2.40.30.20">
    <property type="match status" value="1"/>
</dbReference>
<dbReference type="Gene3D" id="1.20.150.20">
    <property type="entry name" value="ATP synthase alpha/beta chain, C-terminal domain"/>
    <property type="match status" value="1"/>
</dbReference>
<dbReference type="Gene3D" id="3.40.50.300">
    <property type="entry name" value="P-loop containing nucleotide triphosphate hydrolases"/>
    <property type="match status" value="1"/>
</dbReference>
<dbReference type="HAMAP" id="MF_01346">
    <property type="entry name" value="ATP_synth_alpha_bact"/>
    <property type="match status" value="1"/>
</dbReference>
<dbReference type="InterPro" id="IPR023366">
    <property type="entry name" value="ATP_synth_asu-like_sf"/>
</dbReference>
<dbReference type="InterPro" id="IPR000793">
    <property type="entry name" value="ATP_synth_asu_C"/>
</dbReference>
<dbReference type="InterPro" id="IPR038376">
    <property type="entry name" value="ATP_synth_asu_C_sf"/>
</dbReference>
<dbReference type="InterPro" id="IPR033732">
    <property type="entry name" value="ATP_synth_F1_a_nt-bd_dom"/>
</dbReference>
<dbReference type="InterPro" id="IPR005294">
    <property type="entry name" value="ATP_synth_F1_asu"/>
</dbReference>
<dbReference type="InterPro" id="IPR020003">
    <property type="entry name" value="ATPase_a/bsu_AS"/>
</dbReference>
<dbReference type="InterPro" id="IPR004100">
    <property type="entry name" value="ATPase_F1/V1/A1_a/bsu_N"/>
</dbReference>
<dbReference type="InterPro" id="IPR036121">
    <property type="entry name" value="ATPase_F1/V1/A1_a/bsu_N_sf"/>
</dbReference>
<dbReference type="InterPro" id="IPR000194">
    <property type="entry name" value="ATPase_F1/V1/A1_a/bsu_nucl-bd"/>
</dbReference>
<dbReference type="InterPro" id="IPR027417">
    <property type="entry name" value="P-loop_NTPase"/>
</dbReference>
<dbReference type="NCBIfam" id="TIGR00962">
    <property type="entry name" value="atpA"/>
    <property type="match status" value="1"/>
</dbReference>
<dbReference type="NCBIfam" id="NF009884">
    <property type="entry name" value="PRK13343.1"/>
    <property type="match status" value="1"/>
</dbReference>
<dbReference type="PANTHER" id="PTHR48082">
    <property type="entry name" value="ATP SYNTHASE SUBUNIT ALPHA, MITOCHONDRIAL"/>
    <property type="match status" value="1"/>
</dbReference>
<dbReference type="PANTHER" id="PTHR48082:SF2">
    <property type="entry name" value="ATP SYNTHASE SUBUNIT ALPHA, MITOCHONDRIAL"/>
    <property type="match status" value="1"/>
</dbReference>
<dbReference type="Pfam" id="PF00006">
    <property type="entry name" value="ATP-synt_ab"/>
    <property type="match status" value="1"/>
</dbReference>
<dbReference type="Pfam" id="PF00306">
    <property type="entry name" value="ATP-synt_ab_C"/>
    <property type="match status" value="1"/>
</dbReference>
<dbReference type="Pfam" id="PF02874">
    <property type="entry name" value="ATP-synt_ab_N"/>
    <property type="match status" value="1"/>
</dbReference>
<dbReference type="PIRSF" id="PIRSF039088">
    <property type="entry name" value="F_ATPase_subunit_alpha"/>
    <property type="match status" value="1"/>
</dbReference>
<dbReference type="SUPFAM" id="SSF47917">
    <property type="entry name" value="C-terminal domain of alpha and beta subunits of F1 ATP synthase"/>
    <property type="match status" value="1"/>
</dbReference>
<dbReference type="SUPFAM" id="SSF50615">
    <property type="entry name" value="N-terminal domain of alpha and beta subunits of F1 ATP synthase"/>
    <property type="match status" value="1"/>
</dbReference>
<dbReference type="SUPFAM" id="SSF52540">
    <property type="entry name" value="P-loop containing nucleoside triphosphate hydrolases"/>
    <property type="match status" value="1"/>
</dbReference>
<dbReference type="PROSITE" id="PS00152">
    <property type="entry name" value="ATPASE_ALPHA_BETA"/>
    <property type="match status" value="1"/>
</dbReference>
<comment type="function">
    <text evidence="1">Produces ATP from ADP in the presence of a proton gradient across the membrane. The alpha chain is a regulatory subunit.</text>
</comment>
<comment type="catalytic activity">
    <reaction evidence="1">
        <text>ATP + H2O + 4 H(+)(in) = ADP + phosphate + 5 H(+)(out)</text>
        <dbReference type="Rhea" id="RHEA:57720"/>
        <dbReference type="ChEBI" id="CHEBI:15377"/>
        <dbReference type="ChEBI" id="CHEBI:15378"/>
        <dbReference type="ChEBI" id="CHEBI:30616"/>
        <dbReference type="ChEBI" id="CHEBI:43474"/>
        <dbReference type="ChEBI" id="CHEBI:456216"/>
        <dbReference type="EC" id="7.1.2.2"/>
    </reaction>
</comment>
<comment type="subunit">
    <text evidence="1">F-type ATPases have 2 components, CF(1) - the catalytic core - and CF(0) - the membrane proton channel. CF(1) has five subunits: alpha(3), beta(3), gamma(1), delta(1), epsilon(1). CF(0) has four main subunits: a, b, b' and c.</text>
</comment>
<comment type="subcellular location">
    <subcellularLocation>
        <location evidence="1">Plastid</location>
        <location evidence="1">Chloroplast thylakoid membrane</location>
        <topology evidence="1">Peripheral membrane protein</topology>
    </subcellularLocation>
</comment>
<comment type="similarity">
    <text evidence="1">Belongs to the ATPase alpha/beta chains family.</text>
</comment>
<proteinExistence type="inferred from homology"/>
<keyword id="KW-0066">ATP synthesis</keyword>
<keyword id="KW-0067">ATP-binding</keyword>
<keyword id="KW-0139">CF(1)</keyword>
<keyword id="KW-0150">Chloroplast</keyword>
<keyword id="KW-0375">Hydrogen ion transport</keyword>
<keyword id="KW-0406">Ion transport</keyword>
<keyword id="KW-0472">Membrane</keyword>
<keyword id="KW-0547">Nucleotide-binding</keyword>
<keyword id="KW-0934">Plastid</keyword>
<keyword id="KW-0793">Thylakoid</keyword>
<keyword id="KW-1278">Translocase</keyword>
<keyword id="KW-0813">Transport</keyword>
<protein>
    <recommendedName>
        <fullName evidence="1">ATP synthase subunit alpha, chloroplastic</fullName>
        <ecNumber evidence="1">7.1.2.2</ecNumber>
    </recommendedName>
    <alternativeName>
        <fullName evidence="1">ATP synthase F1 sector subunit alpha</fullName>
    </alternativeName>
    <alternativeName>
        <fullName evidence="1">F-ATPase subunit alpha</fullName>
    </alternativeName>
</protein>
<name>ATPA_EUGGR</name>
<reference key="1">
    <citation type="journal article" date="1993" name="Curr. Genet.">
        <title>A novel Euglena gracilis chloroplast operon encoding four ATP synthase subunits and two ribosomal proteins contains 17 introns.</title>
        <authorList>
            <person name="Drager R.G."/>
            <person name="Hallick R.B."/>
        </authorList>
    </citation>
    <scope>NUCLEOTIDE SEQUENCE [GENOMIC DNA]</scope>
    <source>
        <strain>Z / UTEX 753</strain>
    </source>
</reference>
<reference key="2">
    <citation type="journal article" date="1993" name="Nucleic Acids Res.">
        <title>Complete sequence of Euglena gracilis chloroplast DNA.</title>
        <authorList>
            <person name="Hallick R.B."/>
            <person name="Hong L."/>
            <person name="Drager R.G."/>
            <person name="Favreau M.R."/>
            <person name="Monfort A."/>
            <person name="Orsat B."/>
            <person name="Spielmann A."/>
            <person name="Stutz E."/>
        </authorList>
    </citation>
    <scope>NUCLEOTIDE SEQUENCE [LARGE SCALE GENOMIC DNA]</scope>
    <source>
        <strain>Z / UTEX 753</strain>
    </source>
</reference>
<organism>
    <name type="scientific">Euglena gracilis</name>
    <dbReference type="NCBI Taxonomy" id="3039"/>
    <lineage>
        <taxon>Eukaryota</taxon>
        <taxon>Discoba</taxon>
        <taxon>Euglenozoa</taxon>
        <taxon>Euglenida</taxon>
        <taxon>Spirocuta</taxon>
        <taxon>Euglenophyceae</taxon>
        <taxon>Euglenales</taxon>
        <taxon>Euglenaceae</taxon>
        <taxon>Euglena</taxon>
    </lineage>
</organism>
<feature type="chain" id="PRO_0000144375" description="ATP synthase subunit alpha, chloroplastic">
    <location>
        <begin position="1"/>
        <end position="506"/>
    </location>
</feature>
<feature type="binding site" evidence="1">
    <location>
        <begin position="170"/>
        <end position="177"/>
    </location>
    <ligand>
        <name>ATP</name>
        <dbReference type="ChEBI" id="CHEBI:30616"/>
    </ligand>
</feature>
<feature type="site" description="Required for activity" evidence="1">
    <location>
        <position position="363"/>
    </location>
</feature>
<gene>
    <name evidence="1" type="primary">atpA</name>
</gene>
<geneLocation type="chloroplast"/>
<evidence type="ECO:0000255" key="1">
    <source>
        <dbReference type="HAMAP-Rule" id="MF_01346"/>
    </source>
</evidence>
<accession>P30392</accession>
<sequence length="506" mass="55188">MIRVRPNEVTRIIRQQVKKYRQELKIVNVGTVLQVGDGIARIYGLEKVMAGELVEFDEGTIGIALNLEADNVGAVLMGEATNLKEGASVKTTGKIAQIPVGRGFLGRVVDALARPIDGKGDIASFTTRLIESPAPGIVSRRSVHEPLQTGLIAIDAMIPIGRGQRELIIGDRQTGKTAVATDTILNQKGQGVICVYVAIGQKASSVSQIVTTLEKRGAMEYTIIVAENADSSATLQYLAPYTGAALAEYFMYNGKHTLVIYDDLSKQAQAYRQMSLLLRRPPGREAYPGDVFYLHSRLLERAAKLSDELGQGSMTALPIVETQAGDVSAYIPTNVISITDGQVFLSADIFNSGIRPAINVGISVSRVGSAAQIKAMKQVAGKLKLELAQFAELEAFSQFASDLDQATQNQLARGARLRELLKQPQASPLSVADQVATIYTGINGYLDDINLEDVRGFLIELREHINNEKPTFKEIINKTKTFTQEAELLLKFTIIDLKKNFKKRIK</sequence>